<comment type="cofactor">
    <cofactor evidence="1">
        <name>Fe(2+)</name>
        <dbReference type="ChEBI" id="CHEBI:29033"/>
    </cofactor>
    <text evidence="1">Binds 1 Fe(2+) ion per subunit.</text>
</comment>
<comment type="cofactor">
    <cofactor evidence="1">
        <name>L-ascorbate</name>
        <dbReference type="ChEBI" id="CHEBI:38290"/>
    </cofactor>
</comment>
<comment type="sequence caution" evidence="2">
    <conflict type="erroneous initiation">
        <sequence resource="EMBL-CDS" id="ABS06878"/>
    </conflict>
</comment>
<evidence type="ECO:0000255" key="1">
    <source>
        <dbReference type="HAMAP-Rule" id="MF_00657"/>
    </source>
</evidence>
<evidence type="ECO:0000305" key="2"/>
<reference key="1">
    <citation type="submission" date="2007-07" db="EMBL/GenBank/DDBJ databases">
        <title>Complete sequence of chromosome of Shewanella baltica OS185.</title>
        <authorList>
            <consortium name="US DOE Joint Genome Institute"/>
            <person name="Copeland A."/>
            <person name="Lucas S."/>
            <person name="Lapidus A."/>
            <person name="Barry K."/>
            <person name="Glavina del Rio T."/>
            <person name="Dalin E."/>
            <person name="Tice H."/>
            <person name="Pitluck S."/>
            <person name="Sims D."/>
            <person name="Brettin T."/>
            <person name="Bruce D."/>
            <person name="Detter J.C."/>
            <person name="Han C."/>
            <person name="Schmutz J."/>
            <person name="Larimer F."/>
            <person name="Land M."/>
            <person name="Hauser L."/>
            <person name="Kyrpides N."/>
            <person name="Mikhailova N."/>
            <person name="Brettar I."/>
            <person name="Rodrigues J."/>
            <person name="Konstantinidis K."/>
            <person name="Tiedje J."/>
            <person name="Richardson P."/>
        </authorList>
    </citation>
    <scope>NUCLEOTIDE SEQUENCE [LARGE SCALE GENOMIC DNA]</scope>
    <source>
        <strain>OS185</strain>
    </source>
</reference>
<organism>
    <name type="scientific">Shewanella baltica (strain OS185)</name>
    <dbReference type="NCBI Taxonomy" id="402882"/>
    <lineage>
        <taxon>Bacteria</taxon>
        <taxon>Pseudomonadati</taxon>
        <taxon>Pseudomonadota</taxon>
        <taxon>Gammaproteobacteria</taxon>
        <taxon>Alteromonadales</taxon>
        <taxon>Shewanellaceae</taxon>
        <taxon>Shewanella</taxon>
    </lineage>
</organism>
<protein>
    <recommendedName>
        <fullName evidence="1">PKHD-type hydroxylase Shew185_0721</fullName>
        <ecNumber evidence="1">1.14.11.-</ecNumber>
    </recommendedName>
</protein>
<feature type="chain" id="PRO_0000346517" description="PKHD-type hydroxylase Shew185_0721">
    <location>
        <begin position="1"/>
        <end position="224"/>
    </location>
</feature>
<feature type="domain" description="Fe2OG dioxygenase" evidence="1">
    <location>
        <begin position="78"/>
        <end position="176"/>
    </location>
</feature>
<feature type="binding site" evidence="1">
    <location>
        <position position="96"/>
    </location>
    <ligand>
        <name>Fe cation</name>
        <dbReference type="ChEBI" id="CHEBI:24875"/>
    </ligand>
</feature>
<feature type="binding site" evidence="1">
    <location>
        <position position="98"/>
    </location>
    <ligand>
        <name>Fe cation</name>
        <dbReference type="ChEBI" id="CHEBI:24875"/>
    </ligand>
</feature>
<feature type="binding site" evidence="1">
    <location>
        <position position="157"/>
    </location>
    <ligand>
        <name>Fe cation</name>
        <dbReference type="ChEBI" id="CHEBI:24875"/>
    </ligand>
</feature>
<feature type="binding site" evidence="1">
    <location>
        <position position="167"/>
    </location>
    <ligand>
        <name>2-oxoglutarate</name>
        <dbReference type="ChEBI" id="CHEBI:16810"/>
    </ligand>
</feature>
<proteinExistence type="inferred from homology"/>
<keyword id="KW-0223">Dioxygenase</keyword>
<keyword id="KW-0408">Iron</keyword>
<keyword id="KW-0479">Metal-binding</keyword>
<keyword id="KW-0560">Oxidoreductase</keyword>
<keyword id="KW-0847">Vitamin C</keyword>
<sequence>MLIEIPNVFSKQEVSHLREQLDARRWIDGNQTSGAMATTRKRNQQLDKDDPVAVALGQQIMDRLLAHPQFVSAALPLQFYPPLFNRYQGGETFGYHIDNAIRSTPDGMIRTDLSATLFLSEPESYQGGELVIQDTYGQQSIKLSAGSLVLYPSSSLHQVTPVLSGERTAAFMWLQSMVRDEGQRRLLFQLDQSIQTLTAQQAAEQELFNLTGIYHNLLRRWSEL</sequence>
<name>Y721_SHEB8</name>
<accession>A6WJ89</accession>
<gene>
    <name type="ordered locus">Shew185_0721</name>
</gene>
<dbReference type="EC" id="1.14.11.-" evidence="1"/>
<dbReference type="EMBL" id="CP000753">
    <property type="protein sequence ID" value="ABS06878.1"/>
    <property type="status" value="ALT_INIT"/>
    <property type="molecule type" value="Genomic_DNA"/>
</dbReference>
<dbReference type="RefSeq" id="WP_006086056.1">
    <property type="nucleotide sequence ID" value="NC_009665.1"/>
</dbReference>
<dbReference type="SMR" id="A6WJ89"/>
<dbReference type="GeneID" id="11771060"/>
<dbReference type="KEGG" id="sbm:Shew185_0721"/>
<dbReference type="HOGENOM" id="CLU_106663_0_0_6"/>
<dbReference type="GO" id="GO:0016706">
    <property type="term" value="F:2-oxoglutarate-dependent dioxygenase activity"/>
    <property type="evidence" value="ECO:0007669"/>
    <property type="project" value="UniProtKB-UniRule"/>
</dbReference>
<dbReference type="GO" id="GO:0005506">
    <property type="term" value="F:iron ion binding"/>
    <property type="evidence" value="ECO:0007669"/>
    <property type="project" value="UniProtKB-UniRule"/>
</dbReference>
<dbReference type="GO" id="GO:0031418">
    <property type="term" value="F:L-ascorbic acid binding"/>
    <property type="evidence" value="ECO:0007669"/>
    <property type="project" value="UniProtKB-KW"/>
</dbReference>
<dbReference type="GO" id="GO:0006974">
    <property type="term" value="P:DNA damage response"/>
    <property type="evidence" value="ECO:0007669"/>
    <property type="project" value="TreeGrafter"/>
</dbReference>
<dbReference type="GO" id="GO:0006879">
    <property type="term" value="P:intracellular iron ion homeostasis"/>
    <property type="evidence" value="ECO:0007669"/>
    <property type="project" value="TreeGrafter"/>
</dbReference>
<dbReference type="FunFam" id="2.60.120.620:FF:000006">
    <property type="entry name" value="PKHD-type hydroxylase YbiX"/>
    <property type="match status" value="1"/>
</dbReference>
<dbReference type="Gene3D" id="2.60.120.620">
    <property type="entry name" value="q2cbj1_9rhob like domain"/>
    <property type="match status" value="1"/>
</dbReference>
<dbReference type="Gene3D" id="4.10.860.20">
    <property type="entry name" value="Rabenosyn, Rab binding domain"/>
    <property type="match status" value="1"/>
</dbReference>
<dbReference type="HAMAP" id="MF_00657">
    <property type="entry name" value="Hydroxyl_YbiX"/>
    <property type="match status" value="1"/>
</dbReference>
<dbReference type="InterPro" id="IPR005123">
    <property type="entry name" value="Oxoglu/Fe-dep_dioxygenase_dom"/>
</dbReference>
<dbReference type="InterPro" id="IPR041097">
    <property type="entry name" value="PKHD_C"/>
</dbReference>
<dbReference type="InterPro" id="IPR023550">
    <property type="entry name" value="PKHD_hydroxylase"/>
</dbReference>
<dbReference type="InterPro" id="IPR006620">
    <property type="entry name" value="Pro_4_hyd_alph"/>
</dbReference>
<dbReference type="InterPro" id="IPR044862">
    <property type="entry name" value="Pro_4_hyd_alph_FE2OG_OXY"/>
</dbReference>
<dbReference type="NCBIfam" id="NF003974">
    <property type="entry name" value="PRK05467.1-3"/>
    <property type="match status" value="1"/>
</dbReference>
<dbReference type="NCBIfam" id="NF003975">
    <property type="entry name" value="PRK05467.1-4"/>
    <property type="match status" value="1"/>
</dbReference>
<dbReference type="PANTHER" id="PTHR41536">
    <property type="entry name" value="PKHD-TYPE HYDROXYLASE YBIX"/>
    <property type="match status" value="1"/>
</dbReference>
<dbReference type="PANTHER" id="PTHR41536:SF1">
    <property type="entry name" value="PKHD-TYPE HYDROXYLASE YBIX"/>
    <property type="match status" value="1"/>
</dbReference>
<dbReference type="Pfam" id="PF13640">
    <property type="entry name" value="2OG-FeII_Oxy_3"/>
    <property type="match status" value="1"/>
</dbReference>
<dbReference type="Pfam" id="PF18331">
    <property type="entry name" value="PKHD_C"/>
    <property type="match status" value="1"/>
</dbReference>
<dbReference type="SMART" id="SM00702">
    <property type="entry name" value="P4Hc"/>
    <property type="match status" value="1"/>
</dbReference>
<dbReference type="SUPFAM" id="SSF51197">
    <property type="entry name" value="Clavaminate synthase-like"/>
    <property type="match status" value="1"/>
</dbReference>
<dbReference type="PROSITE" id="PS51471">
    <property type="entry name" value="FE2OG_OXY"/>
    <property type="match status" value="1"/>
</dbReference>